<name>RS3_COXB1</name>
<dbReference type="EMBL" id="CP001020">
    <property type="protein sequence ID" value="ACJ19722.1"/>
    <property type="molecule type" value="Genomic_DNA"/>
</dbReference>
<dbReference type="RefSeq" id="WP_005771534.1">
    <property type="nucleotide sequence ID" value="NC_011528.1"/>
</dbReference>
<dbReference type="SMR" id="B6J5D8"/>
<dbReference type="KEGG" id="cbc:CbuK_0439"/>
<dbReference type="HOGENOM" id="CLU_058591_0_2_6"/>
<dbReference type="GO" id="GO:0022627">
    <property type="term" value="C:cytosolic small ribosomal subunit"/>
    <property type="evidence" value="ECO:0007669"/>
    <property type="project" value="TreeGrafter"/>
</dbReference>
<dbReference type="GO" id="GO:0003729">
    <property type="term" value="F:mRNA binding"/>
    <property type="evidence" value="ECO:0007669"/>
    <property type="project" value="UniProtKB-UniRule"/>
</dbReference>
<dbReference type="GO" id="GO:0019843">
    <property type="term" value="F:rRNA binding"/>
    <property type="evidence" value="ECO:0007669"/>
    <property type="project" value="UniProtKB-UniRule"/>
</dbReference>
<dbReference type="GO" id="GO:0003735">
    <property type="term" value="F:structural constituent of ribosome"/>
    <property type="evidence" value="ECO:0007669"/>
    <property type="project" value="InterPro"/>
</dbReference>
<dbReference type="GO" id="GO:0006412">
    <property type="term" value="P:translation"/>
    <property type="evidence" value="ECO:0007669"/>
    <property type="project" value="UniProtKB-UniRule"/>
</dbReference>
<dbReference type="CDD" id="cd02412">
    <property type="entry name" value="KH-II_30S_S3"/>
    <property type="match status" value="1"/>
</dbReference>
<dbReference type="FunFam" id="3.30.1140.32:FF:000001">
    <property type="entry name" value="30S ribosomal protein S3"/>
    <property type="match status" value="1"/>
</dbReference>
<dbReference type="FunFam" id="3.30.300.20:FF:000001">
    <property type="entry name" value="30S ribosomal protein S3"/>
    <property type="match status" value="1"/>
</dbReference>
<dbReference type="Gene3D" id="3.30.300.20">
    <property type="match status" value="1"/>
</dbReference>
<dbReference type="Gene3D" id="3.30.1140.32">
    <property type="entry name" value="Ribosomal protein S3, C-terminal domain"/>
    <property type="match status" value="1"/>
</dbReference>
<dbReference type="HAMAP" id="MF_01309_B">
    <property type="entry name" value="Ribosomal_uS3_B"/>
    <property type="match status" value="1"/>
</dbReference>
<dbReference type="InterPro" id="IPR004087">
    <property type="entry name" value="KH_dom"/>
</dbReference>
<dbReference type="InterPro" id="IPR015946">
    <property type="entry name" value="KH_dom-like_a/b"/>
</dbReference>
<dbReference type="InterPro" id="IPR004044">
    <property type="entry name" value="KH_dom_type_2"/>
</dbReference>
<dbReference type="InterPro" id="IPR009019">
    <property type="entry name" value="KH_sf_prok-type"/>
</dbReference>
<dbReference type="InterPro" id="IPR036419">
    <property type="entry name" value="Ribosomal_S3_C_sf"/>
</dbReference>
<dbReference type="InterPro" id="IPR005704">
    <property type="entry name" value="Ribosomal_uS3_bac-typ"/>
</dbReference>
<dbReference type="InterPro" id="IPR001351">
    <property type="entry name" value="Ribosomal_uS3_C"/>
</dbReference>
<dbReference type="InterPro" id="IPR018280">
    <property type="entry name" value="Ribosomal_uS3_CS"/>
</dbReference>
<dbReference type="NCBIfam" id="TIGR01009">
    <property type="entry name" value="rpsC_bact"/>
    <property type="match status" value="1"/>
</dbReference>
<dbReference type="PANTHER" id="PTHR11760">
    <property type="entry name" value="30S/40S RIBOSOMAL PROTEIN S3"/>
    <property type="match status" value="1"/>
</dbReference>
<dbReference type="PANTHER" id="PTHR11760:SF19">
    <property type="entry name" value="SMALL RIBOSOMAL SUBUNIT PROTEIN US3C"/>
    <property type="match status" value="1"/>
</dbReference>
<dbReference type="Pfam" id="PF07650">
    <property type="entry name" value="KH_2"/>
    <property type="match status" value="1"/>
</dbReference>
<dbReference type="Pfam" id="PF00189">
    <property type="entry name" value="Ribosomal_S3_C"/>
    <property type="match status" value="1"/>
</dbReference>
<dbReference type="SMART" id="SM00322">
    <property type="entry name" value="KH"/>
    <property type="match status" value="1"/>
</dbReference>
<dbReference type="SUPFAM" id="SSF54814">
    <property type="entry name" value="Prokaryotic type KH domain (KH-domain type II)"/>
    <property type="match status" value="1"/>
</dbReference>
<dbReference type="SUPFAM" id="SSF54821">
    <property type="entry name" value="Ribosomal protein S3 C-terminal domain"/>
    <property type="match status" value="1"/>
</dbReference>
<dbReference type="PROSITE" id="PS50823">
    <property type="entry name" value="KH_TYPE_2"/>
    <property type="match status" value="1"/>
</dbReference>
<dbReference type="PROSITE" id="PS00548">
    <property type="entry name" value="RIBOSOMAL_S3"/>
    <property type="match status" value="1"/>
</dbReference>
<comment type="function">
    <text evidence="1">Binds the lower part of the 30S subunit head. Binds mRNA in the 70S ribosome, positioning it for translation.</text>
</comment>
<comment type="subunit">
    <text evidence="1">Part of the 30S ribosomal subunit. Forms a tight complex with proteins S10 and S14.</text>
</comment>
<comment type="similarity">
    <text evidence="1">Belongs to the universal ribosomal protein uS3 family.</text>
</comment>
<feature type="chain" id="PRO_1000140949" description="Small ribosomal subunit protein uS3">
    <location>
        <begin position="1"/>
        <end position="227"/>
    </location>
</feature>
<feature type="domain" description="KH type-2" evidence="1">
    <location>
        <begin position="39"/>
        <end position="107"/>
    </location>
</feature>
<reference key="1">
    <citation type="journal article" date="2009" name="Infect. Immun.">
        <title>Comparative genomics reveal extensive transposon-mediated genomic plasticity and diversity among potential effector proteins within the genus Coxiella.</title>
        <authorList>
            <person name="Beare P.A."/>
            <person name="Unsworth N."/>
            <person name="Andoh M."/>
            <person name="Voth D.E."/>
            <person name="Omsland A."/>
            <person name="Gilk S.D."/>
            <person name="Williams K.P."/>
            <person name="Sobral B.W."/>
            <person name="Kupko J.J. III"/>
            <person name="Porcella S.F."/>
            <person name="Samuel J.E."/>
            <person name="Heinzen R.A."/>
        </authorList>
    </citation>
    <scope>NUCLEOTIDE SEQUENCE [LARGE SCALE GENOMIC DNA]</scope>
    <source>
        <strain>CbuK_Q154</strain>
    </source>
</reference>
<gene>
    <name evidence="1" type="primary">rpsC</name>
    <name type="ordered locus">CbuK_0439</name>
</gene>
<keyword id="KW-0687">Ribonucleoprotein</keyword>
<keyword id="KW-0689">Ribosomal protein</keyword>
<keyword id="KW-0694">RNA-binding</keyword>
<keyword id="KW-0699">rRNA-binding</keyword>
<organism>
    <name type="scientific">Coxiella burnetii (strain CbuK_Q154)</name>
    <name type="common">Coxiella burnetii (strain Q154)</name>
    <dbReference type="NCBI Taxonomy" id="434924"/>
    <lineage>
        <taxon>Bacteria</taxon>
        <taxon>Pseudomonadati</taxon>
        <taxon>Pseudomonadota</taxon>
        <taxon>Gammaproteobacteria</taxon>
        <taxon>Legionellales</taxon>
        <taxon>Coxiellaceae</taxon>
        <taxon>Coxiella</taxon>
    </lineage>
</organism>
<sequence>MGQKVNPVGMRIGITRDWTSNWYADKKDFADRLNEDLNVRQLLQKRLKGAAVSRIQIERPARNAKIIIHSARPGVIIGKKGGEIEALRDEISKVMKVPVHITIEEVRKPELDAKLVAENIAQQLERRVMFRRAMKRAVQNTLRQGALGVKISVSGRLGGAEIARTEWYREGRVPLHTFRADIDYATASAKTTYGIIGVKVWIFKGEVHAPKPQAEEAAPQETEEEVK</sequence>
<accession>B6J5D8</accession>
<proteinExistence type="inferred from homology"/>
<evidence type="ECO:0000255" key="1">
    <source>
        <dbReference type="HAMAP-Rule" id="MF_01309"/>
    </source>
</evidence>
<evidence type="ECO:0000305" key="2"/>
<protein>
    <recommendedName>
        <fullName evidence="1">Small ribosomal subunit protein uS3</fullName>
    </recommendedName>
    <alternativeName>
        <fullName evidence="2">30S ribosomal protein S3</fullName>
    </alternativeName>
</protein>